<comment type="function">
    <text evidence="1">DNA-dependent RNA polymerase (RNAP) catalyzes the transcription of DNA into RNA using the four ribonucleoside triphosphates as substrates.</text>
</comment>
<comment type="catalytic activity">
    <reaction evidence="1">
        <text>RNA(n) + a ribonucleoside 5'-triphosphate = RNA(n+1) + diphosphate</text>
        <dbReference type="Rhea" id="RHEA:21248"/>
        <dbReference type="Rhea" id="RHEA-COMP:14527"/>
        <dbReference type="Rhea" id="RHEA-COMP:17342"/>
        <dbReference type="ChEBI" id="CHEBI:33019"/>
        <dbReference type="ChEBI" id="CHEBI:61557"/>
        <dbReference type="ChEBI" id="CHEBI:140395"/>
        <dbReference type="EC" id="2.7.7.6"/>
    </reaction>
</comment>
<comment type="subunit">
    <text evidence="1">Part of the RNA polymerase complex.</text>
</comment>
<comment type="subcellular location">
    <subcellularLocation>
        <location evidence="1">Cytoplasm</location>
    </subcellularLocation>
</comment>
<comment type="similarity">
    <text evidence="1">Belongs to the archaeal Rpo6/eukaryotic RPB6 RNA polymerase subunit family.</text>
</comment>
<proteinExistence type="inferred from homology"/>
<organism>
    <name type="scientific">Saccharolobus islandicus (strain M.16.27)</name>
    <name type="common">Sulfolobus islandicus</name>
    <dbReference type="NCBI Taxonomy" id="427318"/>
    <lineage>
        <taxon>Archaea</taxon>
        <taxon>Thermoproteota</taxon>
        <taxon>Thermoprotei</taxon>
        <taxon>Sulfolobales</taxon>
        <taxon>Sulfolobaceae</taxon>
        <taxon>Saccharolobus</taxon>
    </lineage>
</organism>
<evidence type="ECO:0000255" key="1">
    <source>
        <dbReference type="HAMAP-Rule" id="MF_00192"/>
    </source>
</evidence>
<accession>C3N5H2</accession>
<sequence>MGLERDGILSQDLHFNEVFVSLWQNKLTRYEIARVISARALQLAMGAPALIDINNISLTDVISIAEEEFKRGVLPITIRRRLPNGKIILLSLRKS</sequence>
<dbReference type="EC" id="2.7.7.6" evidence="1"/>
<dbReference type="EMBL" id="CP001401">
    <property type="protein sequence ID" value="ACP55247.1"/>
    <property type="molecule type" value="Genomic_DNA"/>
</dbReference>
<dbReference type="RefSeq" id="WP_012711319.1">
    <property type="nucleotide sequence ID" value="NC_012632.1"/>
</dbReference>
<dbReference type="SMR" id="C3N5H2"/>
<dbReference type="KEGG" id="sim:M1627_1364"/>
<dbReference type="HOGENOM" id="CLU_112527_4_0_2"/>
<dbReference type="Proteomes" id="UP000002307">
    <property type="component" value="Chromosome"/>
</dbReference>
<dbReference type="GO" id="GO:0005737">
    <property type="term" value="C:cytoplasm"/>
    <property type="evidence" value="ECO:0007669"/>
    <property type="project" value="UniProtKB-SubCell"/>
</dbReference>
<dbReference type="GO" id="GO:0000428">
    <property type="term" value="C:DNA-directed RNA polymerase complex"/>
    <property type="evidence" value="ECO:0007669"/>
    <property type="project" value="UniProtKB-KW"/>
</dbReference>
<dbReference type="GO" id="GO:0003677">
    <property type="term" value="F:DNA binding"/>
    <property type="evidence" value="ECO:0007669"/>
    <property type="project" value="UniProtKB-UniRule"/>
</dbReference>
<dbReference type="GO" id="GO:0003899">
    <property type="term" value="F:DNA-directed RNA polymerase activity"/>
    <property type="evidence" value="ECO:0007669"/>
    <property type="project" value="UniProtKB-UniRule"/>
</dbReference>
<dbReference type="GO" id="GO:0006360">
    <property type="term" value="P:transcription by RNA polymerase I"/>
    <property type="evidence" value="ECO:0007669"/>
    <property type="project" value="TreeGrafter"/>
</dbReference>
<dbReference type="GO" id="GO:0006366">
    <property type="term" value="P:transcription by RNA polymerase II"/>
    <property type="evidence" value="ECO:0007669"/>
    <property type="project" value="TreeGrafter"/>
</dbReference>
<dbReference type="GO" id="GO:0042797">
    <property type="term" value="P:tRNA transcription by RNA polymerase III"/>
    <property type="evidence" value="ECO:0007669"/>
    <property type="project" value="TreeGrafter"/>
</dbReference>
<dbReference type="Gene3D" id="3.90.940.10">
    <property type="match status" value="1"/>
</dbReference>
<dbReference type="HAMAP" id="MF_00192">
    <property type="entry name" value="RNApol_arch_Rpo6"/>
    <property type="match status" value="1"/>
</dbReference>
<dbReference type="InterPro" id="IPR020708">
    <property type="entry name" value="DNA-dir_RNA_polK_14-18kDa_CS"/>
</dbReference>
<dbReference type="InterPro" id="IPR006110">
    <property type="entry name" value="Pol_omega/Rpo6/RPB6"/>
</dbReference>
<dbReference type="InterPro" id="IPR036161">
    <property type="entry name" value="RPB6/omega-like_sf"/>
</dbReference>
<dbReference type="InterPro" id="IPR006111">
    <property type="entry name" value="Rpo6/Rpb6"/>
</dbReference>
<dbReference type="NCBIfam" id="NF002207">
    <property type="entry name" value="PRK01099.1-2"/>
    <property type="match status" value="1"/>
</dbReference>
<dbReference type="NCBIfam" id="NF002208">
    <property type="entry name" value="PRK01099.1-3"/>
    <property type="match status" value="1"/>
</dbReference>
<dbReference type="NCBIfam" id="NF002209">
    <property type="entry name" value="PRK01099.1-4"/>
    <property type="match status" value="1"/>
</dbReference>
<dbReference type="PANTHER" id="PTHR47227">
    <property type="entry name" value="DNA-DIRECTED RNA POLYMERASE SUBUNIT K"/>
    <property type="match status" value="1"/>
</dbReference>
<dbReference type="PANTHER" id="PTHR47227:SF5">
    <property type="entry name" value="DNA-DIRECTED RNA POLYMERASES I, II, AND III SUBUNIT RPABC2"/>
    <property type="match status" value="1"/>
</dbReference>
<dbReference type="Pfam" id="PF01192">
    <property type="entry name" value="RNA_pol_Rpb6"/>
    <property type="match status" value="1"/>
</dbReference>
<dbReference type="SMART" id="SM01409">
    <property type="entry name" value="RNA_pol_Rpb6"/>
    <property type="match status" value="1"/>
</dbReference>
<dbReference type="SUPFAM" id="SSF63562">
    <property type="entry name" value="RPB6/omega subunit-like"/>
    <property type="match status" value="1"/>
</dbReference>
<dbReference type="PROSITE" id="PS01111">
    <property type="entry name" value="RNA_POL_K_14KD"/>
    <property type="match status" value="1"/>
</dbReference>
<name>RPO6_SACI3</name>
<protein>
    <recommendedName>
        <fullName evidence="1">DNA-directed RNA polymerase subunit Rpo6</fullName>
        <ecNumber evidence="1">2.7.7.6</ecNumber>
    </recommendedName>
    <alternativeName>
        <fullName evidence="1">DNA-directed RNA polymerase subunit K</fullName>
    </alternativeName>
</protein>
<gene>
    <name evidence="1" type="primary">rpo6</name>
    <name evidence="1" type="synonym">rpoK</name>
    <name type="ordered locus">M1627_1364</name>
</gene>
<reference key="1">
    <citation type="journal article" date="2009" name="Proc. Natl. Acad. Sci. U.S.A.">
        <title>Biogeography of the Sulfolobus islandicus pan-genome.</title>
        <authorList>
            <person name="Reno M.L."/>
            <person name="Held N.L."/>
            <person name="Fields C.J."/>
            <person name="Burke P.V."/>
            <person name="Whitaker R.J."/>
        </authorList>
    </citation>
    <scope>NUCLEOTIDE SEQUENCE [LARGE SCALE GENOMIC DNA]</scope>
    <source>
        <strain>M.16.27</strain>
    </source>
</reference>
<feature type="chain" id="PRO_1000204013" description="DNA-directed RNA polymerase subunit Rpo6">
    <location>
        <begin position="1"/>
        <end position="95"/>
    </location>
</feature>
<keyword id="KW-0963">Cytoplasm</keyword>
<keyword id="KW-0240">DNA-directed RNA polymerase</keyword>
<keyword id="KW-0548">Nucleotidyltransferase</keyword>
<keyword id="KW-0804">Transcription</keyword>
<keyword id="KW-0808">Transferase</keyword>